<protein>
    <recommendedName>
        <fullName evidence="1">Putative pyruvate, phosphate dikinase regulatory protein</fullName>
        <shortName evidence="1">PPDK regulatory protein</shortName>
        <ecNumber evidence="1">2.7.11.32</ecNumber>
        <ecNumber evidence="1">2.7.4.27</ecNumber>
    </recommendedName>
</protein>
<reference key="1">
    <citation type="journal article" date="2009" name="PLoS ONE">
        <title>Genome degradation in Brucella ovis corresponds with narrowing of its host range and tissue tropism.</title>
        <authorList>
            <person name="Tsolis R.M."/>
            <person name="Seshadri R."/>
            <person name="Santos R.L."/>
            <person name="Sangari F.J."/>
            <person name="Lobo J.M."/>
            <person name="de Jong M.F."/>
            <person name="Ren Q."/>
            <person name="Myers G."/>
            <person name="Brinkac L.M."/>
            <person name="Nelson W.C."/>
            <person name="Deboy R.T."/>
            <person name="Angiuoli S."/>
            <person name="Khouri H."/>
            <person name="Dimitrov G."/>
            <person name="Robinson J.R."/>
            <person name="Mulligan S."/>
            <person name="Walker R.L."/>
            <person name="Elzer P.E."/>
            <person name="Hassan K.A."/>
            <person name="Paulsen I.T."/>
        </authorList>
    </citation>
    <scope>NUCLEOTIDE SEQUENCE [LARGE SCALE GENOMIC DNA]</scope>
    <source>
        <strain>ATCC 25840 / 63/290 / NCTC 10512</strain>
    </source>
</reference>
<organism>
    <name type="scientific">Brucella ovis (strain ATCC 25840 / 63/290 / NCTC 10512)</name>
    <dbReference type="NCBI Taxonomy" id="444178"/>
    <lineage>
        <taxon>Bacteria</taxon>
        <taxon>Pseudomonadati</taxon>
        <taxon>Pseudomonadota</taxon>
        <taxon>Alphaproteobacteria</taxon>
        <taxon>Hyphomicrobiales</taxon>
        <taxon>Brucellaceae</taxon>
        <taxon>Brucella/Ochrobactrum group</taxon>
        <taxon>Brucella</taxon>
    </lineage>
</organism>
<proteinExistence type="inferred from homology"/>
<keyword id="KW-0418">Kinase</keyword>
<keyword id="KW-0547">Nucleotide-binding</keyword>
<keyword id="KW-0723">Serine/threonine-protein kinase</keyword>
<keyword id="KW-0808">Transferase</keyword>
<gene>
    <name type="ordered locus">BOV_1987</name>
</gene>
<sequence length="279" mass="30481">MTRPLSYFHLHLISDATGETLLAAGRAAAAQYANARAIEHIYPLIRTEKQLRKVLEGIDAEPGIVLYTVVDQKLAAIIDESCADMGVPSVSVLEPVLNTFQSYLGAPAHRRASAQHVLNADYFRRIDALNFMMEHDDGQLPLDIEEADVIIVGISRTSKTPTSIYLANRGIKAANVPLVLGIPVPEILFAAKRPLIVGLVATAERISQIRQNRPLGNIPSLDTGLYTDRVSISEELAYARNLCNRHGWPIIDVSRRSIEETAAAILALLRNGKKEGSSS</sequence>
<feature type="chain" id="PRO_0000316643" description="Putative pyruvate, phosphate dikinase regulatory protein">
    <location>
        <begin position="1"/>
        <end position="279"/>
    </location>
</feature>
<feature type="binding site" evidence="1">
    <location>
        <begin position="153"/>
        <end position="160"/>
    </location>
    <ligand>
        <name>ADP</name>
        <dbReference type="ChEBI" id="CHEBI:456216"/>
    </ligand>
</feature>
<accession>A5VT25</accession>
<dbReference type="EC" id="2.7.11.32" evidence="1"/>
<dbReference type="EC" id="2.7.4.27" evidence="1"/>
<dbReference type="EMBL" id="CP000708">
    <property type="protein sequence ID" value="ABQ61700.1"/>
    <property type="status" value="ALT_INIT"/>
    <property type="molecule type" value="Genomic_DNA"/>
</dbReference>
<dbReference type="RefSeq" id="WP_002965131.1">
    <property type="nucleotide sequence ID" value="NC_009505.1"/>
</dbReference>
<dbReference type="SMR" id="A5VT25"/>
<dbReference type="KEGG" id="bov:BOV_1987"/>
<dbReference type="HOGENOM" id="CLU_046206_2_0_5"/>
<dbReference type="PhylomeDB" id="A5VT25"/>
<dbReference type="Proteomes" id="UP000006383">
    <property type="component" value="Chromosome I"/>
</dbReference>
<dbReference type="GO" id="GO:0043531">
    <property type="term" value="F:ADP binding"/>
    <property type="evidence" value="ECO:0007669"/>
    <property type="project" value="UniProtKB-UniRule"/>
</dbReference>
<dbReference type="GO" id="GO:0005524">
    <property type="term" value="F:ATP binding"/>
    <property type="evidence" value="ECO:0007669"/>
    <property type="project" value="InterPro"/>
</dbReference>
<dbReference type="GO" id="GO:0016776">
    <property type="term" value="F:phosphotransferase activity, phosphate group as acceptor"/>
    <property type="evidence" value="ECO:0007669"/>
    <property type="project" value="UniProtKB-UniRule"/>
</dbReference>
<dbReference type="GO" id="GO:0004674">
    <property type="term" value="F:protein serine/threonine kinase activity"/>
    <property type="evidence" value="ECO:0007669"/>
    <property type="project" value="UniProtKB-UniRule"/>
</dbReference>
<dbReference type="HAMAP" id="MF_00921">
    <property type="entry name" value="PDRP"/>
    <property type="match status" value="1"/>
</dbReference>
<dbReference type="InterPro" id="IPR005177">
    <property type="entry name" value="Kinase-pyrophosphorylase"/>
</dbReference>
<dbReference type="InterPro" id="IPR026565">
    <property type="entry name" value="PPDK_reg"/>
</dbReference>
<dbReference type="NCBIfam" id="NF003742">
    <property type="entry name" value="PRK05339.1"/>
    <property type="match status" value="1"/>
</dbReference>
<dbReference type="PANTHER" id="PTHR31756">
    <property type="entry name" value="PYRUVATE, PHOSPHATE DIKINASE REGULATORY PROTEIN 1, CHLOROPLASTIC"/>
    <property type="match status" value="1"/>
</dbReference>
<dbReference type="PANTHER" id="PTHR31756:SF3">
    <property type="entry name" value="PYRUVATE, PHOSPHATE DIKINASE REGULATORY PROTEIN 1, CHLOROPLASTIC"/>
    <property type="match status" value="1"/>
</dbReference>
<dbReference type="Pfam" id="PF03618">
    <property type="entry name" value="Kinase-PPPase"/>
    <property type="match status" value="1"/>
</dbReference>
<name>PDRP_BRUO2</name>
<comment type="function">
    <text evidence="1">Bifunctional serine/threonine kinase and phosphorylase involved in the regulation of the pyruvate, phosphate dikinase (PPDK) by catalyzing its phosphorylation/dephosphorylation.</text>
</comment>
<comment type="catalytic activity">
    <reaction evidence="1">
        <text>N(tele)-phospho-L-histidyl/L-threonyl-[pyruvate, phosphate dikinase] + ADP = N(tele)-phospho-L-histidyl/O-phospho-L-threonyl-[pyruvate, phosphate dikinase] + AMP + H(+)</text>
        <dbReference type="Rhea" id="RHEA:43692"/>
        <dbReference type="Rhea" id="RHEA-COMP:10650"/>
        <dbReference type="Rhea" id="RHEA-COMP:10651"/>
        <dbReference type="ChEBI" id="CHEBI:15378"/>
        <dbReference type="ChEBI" id="CHEBI:30013"/>
        <dbReference type="ChEBI" id="CHEBI:61977"/>
        <dbReference type="ChEBI" id="CHEBI:83586"/>
        <dbReference type="ChEBI" id="CHEBI:456215"/>
        <dbReference type="ChEBI" id="CHEBI:456216"/>
        <dbReference type="EC" id="2.7.11.32"/>
    </reaction>
</comment>
<comment type="catalytic activity">
    <reaction evidence="1">
        <text>N(tele)-phospho-L-histidyl/O-phospho-L-threonyl-[pyruvate, phosphate dikinase] + phosphate + H(+) = N(tele)-phospho-L-histidyl/L-threonyl-[pyruvate, phosphate dikinase] + diphosphate</text>
        <dbReference type="Rhea" id="RHEA:43696"/>
        <dbReference type="Rhea" id="RHEA-COMP:10650"/>
        <dbReference type="Rhea" id="RHEA-COMP:10651"/>
        <dbReference type="ChEBI" id="CHEBI:15378"/>
        <dbReference type="ChEBI" id="CHEBI:30013"/>
        <dbReference type="ChEBI" id="CHEBI:33019"/>
        <dbReference type="ChEBI" id="CHEBI:43474"/>
        <dbReference type="ChEBI" id="CHEBI:61977"/>
        <dbReference type="ChEBI" id="CHEBI:83586"/>
        <dbReference type="EC" id="2.7.4.27"/>
    </reaction>
</comment>
<comment type="similarity">
    <text evidence="1">Belongs to the pyruvate, phosphate/water dikinase regulatory protein family. PDRP subfamily.</text>
</comment>
<comment type="sequence caution" evidence="2">
    <conflict type="erroneous initiation">
        <sequence resource="EMBL-CDS" id="ABQ61700"/>
    </conflict>
</comment>
<evidence type="ECO:0000255" key="1">
    <source>
        <dbReference type="HAMAP-Rule" id="MF_00921"/>
    </source>
</evidence>
<evidence type="ECO:0000305" key="2"/>